<feature type="chain" id="PRO_1000096292" description="tRNA-specific 2-thiouridylase MnmA">
    <location>
        <begin position="1"/>
        <end position="342"/>
    </location>
</feature>
<feature type="region of interest" description="Interaction with tRNA" evidence="1">
    <location>
        <begin position="138"/>
        <end position="140"/>
    </location>
</feature>
<feature type="region of interest" description="Interaction with tRNA" evidence="1">
    <location>
        <begin position="293"/>
        <end position="294"/>
    </location>
</feature>
<feature type="active site" description="Nucleophile" evidence="1">
    <location>
        <position position="92"/>
    </location>
</feature>
<feature type="active site" description="Cysteine persulfide intermediate" evidence="1">
    <location>
        <position position="191"/>
    </location>
</feature>
<feature type="binding site" evidence="1">
    <location>
        <begin position="6"/>
        <end position="13"/>
    </location>
    <ligand>
        <name>ATP</name>
        <dbReference type="ChEBI" id="CHEBI:30616"/>
    </ligand>
</feature>
<feature type="binding site" evidence="1">
    <location>
        <position position="32"/>
    </location>
    <ligand>
        <name>ATP</name>
        <dbReference type="ChEBI" id="CHEBI:30616"/>
    </ligand>
</feature>
<feature type="binding site" evidence="1">
    <location>
        <position position="116"/>
    </location>
    <ligand>
        <name>ATP</name>
        <dbReference type="ChEBI" id="CHEBI:30616"/>
    </ligand>
</feature>
<feature type="site" description="Interaction with tRNA" evidence="1">
    <location>
        <position position="117"/>
    </location>
</feature>
<feature type="site" description="Interaction with tRNA" evidence="1">
    <location>
        <position position="325"/>
    </location>
</feature>
<feature type="disulfide bond" description="Alternate" evidence="1">
    <location>
        <begin position="92"/>
        <end position="191"/>
    </location>
</feature>
<accession>B5Z8Y2</accession>
<proteinExistence type="inferred from homology"/>
<gene>
    <name evidence="1" type="primary">mnmA</name>
    <name type="ordered locus">HPG27_1283</name>
</gene>
<reference key="1">
    <citation type="journal article" date="2009" name="J. Bacteriol.">
        <title>The complete genome sequence of Helicobacter pylori strain G27.</title>
        <authorList>
            <person name="Baltrus D.A."/>
            <person name="Amieva M.R."/>
            <person name="Covacci A."/>
            <person name="Lowe T.M."/>
            <person name="Merrell D.S."/>
            <person name="Ottemann K.M."/>
            <person name="Stein M."/>
            <person name="Salama N.R."/>
            <person name="Guillemin K."/>
        </authorList>
    </citation>
    <scope>NUCLEOTIDE SEQUENCE [LARGE SCALE GENOMIC DNA]</scope>
    <source>
        <strain>G27</strain>
    </source>
</reference>
<sequence>MKIAVLLSGGVDSSYSAYSLKEQGHELVGVYLKLHASEKKHDLYIKNAQKACEFLGIPLEVLDFQKDFKSTVYDEFISAYEEGQTPNPCTLCNPLMKFGLALDHALKLGCEKIATGHYARVKEIDKVSYIQEALDKTKDQSYFLYALEHEVIAKLVFPLGDLLKKDIKPLALNAMPFLGTLETYKESQEICFVEKSYIDTLKKHVEVEKEGVVKNLQGEIIGTHKGYMQYTIGKRKGFSIKGALEPHFVVGIDAKKNELIVGKKEDLATHSLKAKNKSLMKDFKSGEYFIKARYRSVPTKAFVSLKDEMIEVGFKESFYGVAKGQALVVYKDDILLGGGVIV</sequence>
<protein>
    <recommendedName>
        <fullName evidence="1">tRNA-specific 2-thiouridylase MnmA</fullName>
        <ecNumber evidence="1">2.8.1.13</ecNumber>
    </recommendedName>
</protein>
<organism>
    <name type="scientific">Helicobacter pylori (strain G27)</name>
    <dbReference type="NCBI Taxonomy" id="563041"/>
    <lineage>
        <taxon>Bacteria</taxon>
        <taxon>Pseudomonadati</taxon>
        <taxon>Campylobacterota</taxon>
        <taxon>Epsilonproteobacteria</taxon>
        <taxon>Campylobacterales</taxon>
        <taxon>Helicobacteraceae</taxon>
        <taxon>Helicobacter</taxon>
    </lineage>
</organism>
<keyword id="KW-0067">ATP-binding</keyword>
<keyword id="KW-0963">Cytoplasm</keyword>
<keyword id="KW-1015">Disulfide bond</keyword>
<keyword id="KW-0547">Nucleotide-binding</keyword>
<keyword id="KW-1185">Reference proteome</keyword>
<keyword id="KW-0694">RNA-binding</keyword>
<keyword id="KW-0808">Transferase</keyword>
<keyword id="KW-0819">tRNA processing</keyword>
<keyword id="KW-0820">tRNA-binding</keyword>
<comment type="function">
    <text evidence="1">Catalyzes the 2-thiolation of uridine at the wobble position (U34) of tRNA, leading to the formation of s(2)U34.</text>
</comment>
<comment type="catalytic activity">
    <reaction evidence="1">
        <text>S-sulfanyl-L-cysteinyl-[protein] + uridine(34) in tRNA + AH2 + ATP = 2-thiouridine(34) in tRNA + L-cysteinyl-[protein] + A + AMP + diphosphate + H(+)</text>
        <dbReference type="Rhea" id="RHEA:47032"/>
        <dbReference type="Rhea" id="RHEA-COMP:10131"/>
        <dbReference type="Rhea" id="RHEA-COMP:11726"/>
        <dbReference type="Rhea" id="RHEA-COMP:11727"/>
        <dbReference type="Rhea" id="RHEA-COMP:11728"/>
        <dbReference type="ChEBI" id="CHEBI:13193"/>
        <dbReference type="ChEBI" id="CHEBI:15378"/>
        <dbReference type="ChEBI" id="CHEBI:17499"/>
        <dbReference type="ChEBI" id="CHEBI:29950"/>
        <dbReference type="ChEBI" id="CHEBI:30616"/>
        <dbReference type="ChEBI" id="CHEBI:33019"/>
        <dbReference type="ChEBI" id="CHEBI:61963"/>
        <dbReference type="ChEBI" id="CHEBI:65315"/>
        <dbReference type="ChEBI" id="CHEBI:87170"/>
        <dbReference type="ChEBI" id="CHEBI:456215"/>
        <dbReference type="EC" id="2.8.1.13"/>
    </reaction>
</comment>
<comment type="subcellular location">
    <subcellularLocation>
        <location evidence="1">Cytoplasm</location>
    </subcellularLocation>
</comment>
<comment type="similarity">
    <text evidence="1">Belongs to the MnmA/TRMU family.</text>
</comment>
<dbReference type="EC" id="2.8.1.13" evidence="1"/>
<dbReference type="EMBL" id="CP001173">
    <property type="protein sequence ID" value="ACI28031.1"/>
    <property type="molecule type" value="Genomic_DNA"/>
</dbReference>
<dbReference type="RefSeq" id="WP_000686330.1">
    <property type="nucleotide sequence ID" value="NC_011333.1"/>
</dbReference>
<dbReference type="SMR" id="B5Z8Y2"/>
<dbReference type="KEGG" id="hpg:HPG27_1283"/>
<dbReference type="HOGENOM" id="CLU_035188_0_0_7"/>
<dbReference type="Proteomes" id="UP000001735">
    <property type="component" value="Chromosome"/>
</dbReference>
<dbReference type="GO" id="GO:0005737">
    <property type="term" value="C:cytoplasm"/>
    <property type="evidence" value="ECO:0007669"/>
    <property type="project" value="UniProtKB-SubCell"/>
</dbReference>
<dbReference type="GO" id="GO:0005524">
    <property type="term" value="F:ATP binding"/>
    <property type="evidence" value="ECO:0007669"/>
    <property type="project" value="UniProtKB-KW"/>
</dbReference>
<dbReference type="GO" id="GO:0000049">
    <property type="term" value="F:tRNA binding"/>
    <property type="evidence" value="ECO:0007669"/>
    <property type="project" value="UniProtKB-KW"/>
</dbReference>
<dbReference type="GO" id="GO:0103016">
    <property type="term" value="F:tRNA-uridine 2-sulfurtransferase activity"/>
    <property type="evidence" value="ECO:0007669"/>
    <property type="project" value="UniProtKB-EC"/>
</dbReference>
<dbReference type="GO" id="GO:0002143">
    <property type="term" value="P:tRNA wobble position uridine thiolation"/>
    <property type="evidence" value="ECO:0007669"/>
    <property type="project" value="TreeGrafter"/>
</dbReference>
<dbReference type="CDD" id="cd01998">
    <property type="entry name" value="MnmA_TRMU-like"/>
    <property type="match status" value="1"/>
</dbReference>
<dbReference type="FunFam" id="2.30.30.280:FF:000001">
    <property type="entry name" value="tRNA-specific 2-thiouridylase MnmA"/>
    <property type="match status" value="1"/>
</dbReference>
<dbReference type="FunFam" id="3.40.50.620:FF:000323">
    <property type="entry name" value="tRNA-specific 2-thiouridylase MnmA"/>
    <property type="match status" value="1"/>
</dbReference>
<dbReference type="Gene3D" id="2.30.30.280">
    <property type="entry name" value="Adenine nucleotide alpha hydrolases-like domains"/>
    <property type="match status" value="1"/>
</dbReference>
<dbReference type="Gene3D" id="3.40.50.620">
    <property type="entry name" value="HUPs"/>
    <property type="match status" value="1"/>
</dbReference>
<dbReference type="Gene3D" id="2.40.30.10">
    <property type="entry name" value="Translation factors"/>
    <property type="match status" value="1"/>
</dbReference>
<dbReference type="HAMAP" id="MF_00144">
    <property type="entry name" value="tRNA_thiouridyl_MnmA"/>
    <property type="match status" value="1"/>
</dbReference>
<dbReference type="InterPro" id="IPR004506">
    <property type="entry name" value="MnmA-like"/>
</dbReference>
<dbReference type="InterPro" id="IPR046885">
    <property type="entry name" value="MnmA-like_C"/>
</dbReference>
<dbReference type="InterPro" id="IPR046884">
    <property type="entry name" value="MnmA-like_central"/>
</dbReference>
<dbReference type="InterPro" id="IPR023382">
    <property type="entry name" value="MnmA-like_central_sf"/>
</dbReference>
<dbReference type="InterPro" id="IPR014729">
    <property type="entry name" value="Rossmann-like_a/b/a_fold"/>
</dbReference>
<dbReference type="NCBIfam" id="NF001138">
    <property type="entry name" value="PRK00143.1"/>
    <property type="match status" value="1"/>
</dbReference>
<dbReference type="NCBIfam" id="TIGR00420">
    <property type="entry name" value="trmU"/>
    <property type="match status" value="1"/>
</dbReference>
<dbReference type="PANTHER" id="PTHR11933:SF5">
    <property type="entry name" value="MITOCHONDRIAL TRNA-SPECIFIC 2-THIOURIDYLASE 1"/>
    <property type="match status" value="1"/>
</dbReference>
<dbReference type="PANTHER" id="PTHR11933">
    <property type="entry name" value="TRNA 5-METHYLAMINOMETHYL-2-THIOURIDYLATE -METHYLTRANSFERASE"/>
    <property type="match status" value="1"/>
</dbReference>
<dbReference type="Pfam" id="PF03054">
    <property type="entry name" value="tRNA_Me_trans"/>
    <property type="match status" value="1"/>
</dbReference>
<dbReference type="Pfam" id="PF20258">
    <property type="entry name" value="tRNA_Me_trans_C"/>
    <property type="match status" value="1"/>
</dbReference>
<dbReference type="Pfam" id="PF20259">
    <property type="entry name" value="tRNA_Me_trans_M"/>
    <property type="match status" value="1"/>
</dbReference>
<dbReference type="SUPFAM" id="SSF52402">
    <property type="entry name" value="Adenine nucleotide alpha hydrolases-like"/>
    <property type="match status" value="1"/>
</dbReference>
<name>MNMA_HELPG</name>
<evidence type="ECO:0000255" key="1">
    <source>
        <dbReference type="HAMAP-Rule" id="MF_00144"/>
    </source>
</evidence>